<comment type="function">
    <text evidence="2">This three-finger toxin binds and inhibits the nicotinic acetylcholine receptor (nAChR).</text>
</comment>
<comment type="subcellular location">
    <subcellularLocation>
        <location evidence="3">Secreted</location>
    </subcellularLocation>
</comment>
<comment type="tissue specificity">
    <text evidence="5">Expressed by the venom gland.</text>
</comment>
<comment type="toxic dose">
    <text evidence="3">LD(50) is 160 ug/kg by intraperitoneal injection into mice.</text>
</comment>
<comment type="miscellaneous">
    <text evidence="5">Is classified as a P-type cytotoxin, since a proline residue stands at position 49 (Pro-31 in standard classification).</text>
</comment>
<comment type="similarity">
    <text evidence="5">Belongs to the three-finger toxin family. Short-chain subfamily.</text>
</comment>
<name>3SXZ_OPHHA</name>
<organism>
    <name type="scientific">Ophiophagus hannah</name>
    <name type="common">King cobra</name>
    <name type="synonym">Naja hannah</name>
    <dbReference type="NCBI Taxonomy" id="8665"/>
    <lineage>
        <taxon>Eukaryota</taxon>
        <taxon>Metazoa</taxon>
        <taxon>Chordata</taxon>
        <taxon>Craniata</taxon>
        <taxon>Vertebrata</taxon>
        <taxon>Euteleostomi</taxon>
        <taxon>Lepidosauria</taxon>
        <taxon>Squamata</taxon>
        <taxon>Bifurcata</taxon>
        <taxon>Unidentata</taxon>
        <taxon>Episquamata</taxon>
        <taxon>Toxicofera</taxon>
        <taxon>Serpentes</taxon>
        <taxon>Colubroidea</taxon>
        <taxon>Elapidae</taxon>
        <taxon>Elapinae</taxon>
        <taxon>Ophiophagus</taxon>
    </lineage>
</organism>
<feature type="signal peptide" evidence="3">
    <location>
        <begin position="1"/>
        <end position="21"/>
    </location>
</feature>
<feature type="chain" id="PRO_5000093326" description="Short neurotoxin OH-26" evidence="6">
    <location>
        <begin position="22"/>
        <end position="78"/>
    </location>
</feature>
<feature type="site" description="Important residue for inhibition of muscle alpha-1-beta-1-delta-epsilon and neuronal alpha-3-beta-2/CHRNA3-CHRNB2 nAChR" evidence="2">
    <location>
        <position position="28"/>
    </location>
</feature>
<feature type="site" description="Key residue for inhibition of muscle alpha-1-beta-1-delta-epsilon (CHRNA1-CHRNB1-CHRND-CHRNE) nAChR" evidence="2">
    <location>
        <position position="44"/>
    </location>
</feature>
<feature type="site" description="Key residue for inhibition of muscle alpha-1-beta-1-delta-epsilon (CHRNA1-CHRNB1-CHRND-CHRNE) and important for inhibition of neuronal alpha-3-beta-2/CHRNA3-CHRNB2 nAChR" evidence="2">
    <location>
        <position position="46"/>
    </location>
</feature>
<feature type="site" description="Key residue for inhibition of muscle alpha-1-beta-1-delta-epsilon (CHRNA1-CHRNB1-CHRND-CHRNE) and important residue for inhibition of neuronal alpha-3-beta-2/CHRNA3-CHRNB2 nAChR" evidence="2">
    <location>
        <position position="48"/>
    </location>
</feature>
<feature type="site" description="Important residue for inhibition of muscle alpha-1-beta-1-delta-epsilon (CHRNA1-CHRNB1-CHRND-CHRNE) and neuronal alpha-3-beta-2/CHRNA3-CHRNB2 nAChR" evidence="2">
    <location>
        <position position="51"/>
    </location>
</feature>
<feature type="site" description="Important residue for inhibition of muscle alpha-1-beta-1-delta-epsilon (CHRNA1-CHRNB1-CHRND-CHRNE) and neuronal alpha-3-beta-2/CHRNA3-CHRNB2 nAChR" evidence="2">
    <location>
        <position position="66"/>
    </location>
</feature>
<feature type="disulfide bond" evidence="1">
    <location>
        <begin position="24"/>
        <end position="40"/>
    </location>
</feature>
<feature type="disulfide bond" evidence="1">
    <location>
        <begin position="33"/>
        <end position="58"/>
    </location>
</feature>
<feature type="disulfide bond" evidence="1">
    <location>
        <begin position="62"/>
        <end position="70"/>
    </location>
</feature>
<feature type="disulfide bond" evidence="1">
    <location>
        <begin position="71"/>
        <end position="76"/>
    </location>
</feature>
<accession>Q53B52</accession>
<sequence length="78" mass="8756">MKNLLLTFLVVTIVCLDLGYTLICHQRHGLQTCEPAQKFCFAQTVMPFPNHPLTLMGCTYSCPTEKNAVCCSTDKCNR</sequence>
<protein>
    <recommendedName>
        <fullName evidence="4">Short neurotoxin OH-26</fullName>
    </recommendedName>
    <alternativeName>
        <fullName>Three-finger toxin</fullName>
        <shortName>3FTx</shortName>
    </alternativeName>
</protein>
<keyword id="KW-0008">Acetylcholine receptor inhibiting toxin</keyword>
<keyword id="KW-0903">Direct protein sequencing</keyword>
<keyword id="KW-1015">Disulfide bond</keyword>
<keyword id="KW-0872">Ion channel impairing toxin</keyword>
<keyword id="KW-0528">Neurotoxin</keyword>
<keyword id="KW-0629">Postsynaptic neurotoxin</keyword>
<keyword id="KW-0964">Secreted</keyword>
<keyword id="KW-0732">Signal</keyword>
<keyword id="KW-0800">Toxin</keyword>
<proteinExistence type="evidence at protein level"/>
<reference key="1">
    <citation type="journal article" date="2004" name="Toxicon">
        <title>Cloning and purification of alpha-neurotoxins from king cobra (Ophiophagus hannah).</title>
        <authorList>
            <person name="He Y.-Y."/>
            <person name="Lee W.-H."/>
            <person name="Zhang Y."/>
        </authorList>
    </citation>
    <scope>NUCLEOTIDE SEQUENCE [MRNA]</scope>
    <scope>PROTEIN SEQUENCE OF 22-46</scope>
    <scope>TOXIC DOSE</scope>
    <scope>SUBCELLULAR LOCATION</scope>
    <source>
        <tissue>Venom</tissue>
        <tissue>Venom gland</tissue>
    </source>
</reference>
<evidence type="ECO:0000250" key="1">
    <source>
        <dbReference type="UniProtKB" id="P0DKR6"/>
    </source>
</evidence>
<evidence type="ECO:0000250" key="2">
    <source>
        <dbReference type="UniProtKB" id="P83302"/>
    </source>
</evidence>
<evidence type="ECO:0000269" key="3">
    <source>
    </source>
</evidence>
<evidence type="ECO:0000303" key="4">
    <source>
    </source>
</evidence>
<evidence type="ECO:0000305" key="5"/>
<evidence type="ECO:0000305" key="6">
    <source>
    </source>
</evidence>
<dbReference type="EMBL" id="AY596934">
    <property type="protein sequence ID" value="AAT97256.1"/>
    <property type="molecule type" value="mRNA"/>
</dbReference>
<dbReference type="SMR" id="Q53B52"/>
<dbReference type="GO" id="GO:0005576">
    <property type="term" value="C:extracellular region"/>
    <property type="evidence" value="ECO:0007669"/>
    <property type="project" value="UniProtKB-SubCell"/>
</dbReference>
<dbReference type="GO" id="GO:0030550">
    <property type="term" value="F:acetylcholine receptor inhibitor activity"/>
    <property type="evidence" value="ECO:0007669"/>
    <property type="project" value="UniProtKB-KW"/>
</dbReference>
<dbReference type="GO" id="GO:0099106">
    <property type="term" value="F:ion channel regulator activity"/>
    <property type="evidence" value="ECO:0007669"/>
    <property type="project" value="UniProtKB-KW"/>
</dbReference>
<dbReference type="GO" id="GO:0090729">
    <property type="term" value="F:toxin activity"/>
    <property type="evidence" value="ECO:0007669"/>
    <property type="project" value="UniProtKB-KW"/>
</dbReference>
<dbReference type="CDD" id="cd00206">
    <property type="entry name" value="TFP_snake_toxin"/>
    <property type="match status" value="1"/>
</dbReference>
<dbReference type="Gene3D" id="2.10.60.10">
    <property type="entry name" value="CD59"/>
    <property type="match status" value="1"/>
</dbReference>
<dbReference type="InterPro" id="IPR003571">
    <property type="entry name" value="Snake_3FTx"/>
</dbReference>
<dbReference type="InterPro" id="IPR045860">
    <property type="entry name" value="Snake_toxin-like_sf"/>
</dbReference>
<dbReference type="InterPro" id="IPR054131">
    <property type="entry name" value="Toxin_cobra-type"/>
</dbReference>
<dbReference type="Pfam" id="PF21947">
    <property type="entry name" value="Toxin_cobra-type"/>
    <property type="match status" value="1"/>
</dbReference>
<dbReference type="SUPFAM" id="SSF57302">
    <property type="entry name" value="Snake toxin-like"/>
    <property type="match status" value="1"/>
</dbReference>